<protein>
    <recommendedName>
        <fullName evidence="1">2,3-bisphosphoglycerate-dependent phosphoglycerate mutase</fullName>
        <shortName evidence="1">BPG-dependent PGAM</shortName>
        <shortName evidence="1">PGAM</shortName>
        <shortName evidence="1">Phosphoglyceromutase</shortName>
        <shortName evidence="1">dPGM</shortName>
        <ecNumber evidence="1">5.4.2.11</ecNumber>
    </recommendedName>
</protein>
<name>GPMA_MANSM</name>
<keyword id="KW-0312">Gluconeogenesis</keyword>
<keyword id="KW-0324">Glycolysis</keyword>
<keyword id="KW-0413">Isomerase</keyword>
<evidence type="ECO:0000255" key="1">
    <source>
        <dbReference type="HAMAP-Rule" id="MF_01039"/>
    </source>
</evidence>
<reference key="1">
    <citation type="journal article" date="2004" name="Nat. Biotechnol.">
        <title>The genome sequence of the capnophilic rumen bacterium Mannheimia succiniciproducens.</title>
        <authorList>
            <person name="Hong S.H."/>
            <person name="Kim J.S."/>
            <person name="Lee S.Y."/>
            <person name="In Y.H."/>
            <person name="Choi S.S."/>
            <person name="Rih J.-K."/>
            <person name="Kim C.H."/>
            <person name="Jeong H."/>
            <person name="Hur C.G."/>
            <person name="Kim J.J."/>
        </authorList>
    </citation>
    <scope>NUCLEOTIDE SEQUENCE [LARGE SCALE GENOMIC DNA]</scope>
    <source>
        <strain>KCTC 0769BP / MBEL55E</strain>
    </source>
</reference>
<sequence>MELVFIRHGLSEWNALNLFTGWRDVNLSEKGVEEAKEAGRKLKAAGFEFDIAFTSVLTRAIKTCNLVLEESNQLWVPQIKTWRLNERHYGGLQGLNKAEAAAEHGDEQVRIWRRSYDVLPPVLDPKDPNSAHNDRRYAHLPADVVPDCENLKVTLERVLPFWEDQIAPAIKAGKRVLVAAHGNSLRALAKHIEGISDADIMDLEIPTGQPLVYTLDDNLKVVSKRYL</sequence>
<comment type="function">
    <text evidence="1">Catalyzes the interconversion of 2-phosphoglycerate and 3-phosphoglycerate.</text>
</comment>
<comment type="catalytic activity">
    <reaction evidence="1">
        <text>(2R)-2-phosphoglycerate = (2R)-3-phosphoglycerate</text>
        <dbReference type="Rhea" id="RHEA:15901"/>
        <dbReference type="ChEBI" id="CHEBI:58272"/>
        <dbReference type="ChEBI" id="CHEBI:58289"/>
        <dbReference type="EC" id="5.4.2.11"/>
    </reaction>
</comment>
<comment type="pathway">
    <text evidence="1">Carbohydrate degradation; glycolysis; pyruvate from D-glyceraldehyde 3-phosphate: step 3/5.</text>
</comment>
<comment type="subunit">
    <text evidence="1">Homodimer.</text>
</comment>
<comment type="similarity">
    <text evidence="1">Belongs to the phosphoglycerate mutase family. BPG-dependent PGAM subfamily.</text>
</comment>
<dbReference type="EC" id="5.4.2.11" evidence="1"/>
<dbReference type="EMBL" id="AE016827">
    <property type="protein sequence ID" value="AAU38928.1"/>
    <property type="molecule type" value="Genomic_DNA"/>
</dbReference>
<dbReference type="RefSeq" id="WP_011201466.1">
    <property type="nucleotide sequence ID" value="NC_006300.1"/>
</dbReference>
<dbReference type="SMR" id="Q65Q32"/>
<dbReference type="STRING" id="221988.MS2321"/>
<dbReference type="KEGG" id="msu:MS2321"/>
<dbReference type="eggNOG" id="COG0588">
    <property type="taxonomic scope" value="Bacteria"/>
</dbReference>
<dbReference type="HOGENOM" id="CLU_033323_1_5_6"/>
<dbReference type="OrthoDB" id="9781415at2"/>
<dbReference type="UniPathway" id="UPA00109">
    <property type="reaction ID" value="UER00186"/>
</dbReference>
<dbReference type="Proteomes" id="UP000000607">
    <property type="component" value="Chromosome"/>
</dbReference>
<dbReference type="GO" id="GO:0004619">
    <property type="term" value="F:phosphoglycerate mutase activity"/>
    <property type="evidence" value="ECO:0007669"/>
    <property type="project" value="UniProtKB-EC"/>
</dbReference>
<dbReference type="GO" id="GO:0006094">
    <property type="term" value="P:gluconeogenesis"/>
    <property type="evidence" value="ECO:0007669"/>
    <property type="project" value="UniProtKB-UniRule"/>
</dbReference>
<dbReference type="GO" id="GO:0006096">
    <property type="term" value="P:glycolytic process"/>
    <property type="evidence" value="ECO:0007669"/>
    <property type="project" value="UniProtKB-UniRule"/>
</dbReference>
<dbReference type="CDD" id="cd07067">
    <property type="entry name" value="HP_PGM_like"/>
    <property type="match status" value="1"/>
</dbReference>
<dbReference type="FunFam" id="3.40.50.1240:FF:000003">
    <property type="entry name" value="2,3-bisphosphoglycerate-dependent phosphoglycerate mutase"/>
    <property type="match status" value="1"/>
</dbReference>
<dbReference type="Gene3D" id="3.40.50.1240">
    <property type="entry name" value="Phosphoglycerate mutase-like"/>
    <property type="match status" value="1"/>
</dbReference>
<dbReference type="HAMAP" id="MF_01039">
    <property type="entry name" value="PGAM_GpmA"/>
    <property type="match status" value="1"/>
</dbReference>
<dbReference type="InterPro" id="IPR013078">
    <property type="entry name" value="His_Pase_superF_clade-1"/>
</dbReference>
<dbReference type="InterPro" id="IPR029033">
    <property type="entry name" value="His_PPase_superfam"/>
</dbReference>
<dbReference type="InterPro" id="IPR005952">
    <property type="entry name" value="Phosphogly_mut1"/>
</dbReference>
<dbReference type="NCBIfam" id="TIGR01258">
    <property type="entry name" value="pgm_1"/>
    <property type="match status" value="1"/>
</dbReference>
<dbReference type="NCBIfam" id="NF010713">
    <property type="entry name" value="PRK14115.1"/>
    <property type="match status" value="1"/>
</dbReference>
<dbReference type="NCBIfam" id="NF010716">
    <property type="entry name" value="PRK14118.1"/>
    <property type="match status" value="1"/>
</dbReference>
<dbReference type="PANTHER" id="PTHR11931">
    <property type="entry name" value="PHOSPHOGLYCERATE MUTASE"/>
    <property type="match status" value="1"/>
</dbReference>
<dbReference type="Pfam" id="PF00300">
    <property type="entry name" value="His_Phos_1"/>
    <property type="match status" value="2"/>
</dbReference>
<dbReference type="PIRSF" id="PIRSF000709">
    <property type="entry name" value="6PFK_2-Ptase"/>
    <property type="match status" value="1"/>
</dbReference>
<dbReference type="SMART" id="SM00855">
    <property type="entry name" value="PGAM"/>
    <property type="match status" value="1"/>
</dbReference>
<dbReference type="SUPFAM" id="SSF53254">
    <property type="entry name" value="Phosphoglycerate mutase-like"/>
    <property type="match status" value="1"/>
</dbReference>
<gene>
    <name evidence="1" type="primary">gpmA</name>
    <name type="ordered locus">MS2321</name>
</gene>
<feature type="chain" id="PRO_0000229127" description="2,3-bisphosphoglycerate-dependent phosphoglycerate mutase">
    <location>
        <begin position="1"/>
        <end position="227"/>
    </location>
</feature>
<feature type="active site" description="Tele-phosphohistidine intermediate" evidence="1">
    <location>
        <position position="8"/>
    </location>
</feature>
<feature type="active site" description="Proton donor/acceptor" evidence="1">
    <location>
        <position position="86"/>
    </location>
</feature>
<feature type="binding site" evidence="1">
    <location>
        <begin position="7"/>
        <end position="14"/>
    </location>
    <ligand>
        <name>substrate</name>
    </ligand>
</feature>
<feature type="binding site" evidence="1">
    <location>
        <begin position="20"/>
        <end position="21"/>
    </location>
    <ligand>
        <name>substrate</name>
    </ligand>
</feature>
<feature type="binding site" evidence="1">
    <location>
        <position position="59"/>
    </location>
    <ligand>
        <name>substrate</name>
    </ligand>
</feature>
<feature type="binding site" evidence="1">
    <location>
        <begin position="86"/>
        <end position="89"/>
    </location>
    <ligand>
        <name>substrate</name>
    </ligand>
</feature>
<feature type="binding site" evidence="1">
    <location>
        <position position="97"/>
    </location>
    <ligand>
        <name>substrate</name>
    </ligand>
</feature>
<feature type="binding site" evidence="1">
    <location>
        <begin position="113"/>
        <end position="114"/>
    </location>
    <ligand>
        <name>substrate</name>
    </ligand>
</feature>
<feature type="binding site" evidence="1">
    <location>
        <begin position="182"/>
        <end position="183"/>
    </location>
    <ligand>
        <name>substrate</name>
    </ligand>
</feature>
<feature type="site" description="Transition state stabilizer" evidence="1">
    <location>
        <position position="181"/>
    </location>
</feature>
<proteinExistence type="inferred from homology"/>
<accession>Q65Q32</accession>
<organism>
    <name type="scientific">Mannheimia succiniciproducens (strain KCTC 0769BP / MBEL55E)</name>
    <dbReference type="NCBI Taxonomy" id="221988"/>
    <lineage>
        <taxon>Bacteria</taxon>
        <taxon>Pseudomonadati</taxon>
        <taxon>Pseudomonadota</taxon>
        <taxon>Gammaproteobacteria</taxon>
        <taxon>Pasteurellales</taxon>
        <taxon>Pasteurellaceae</taxon>
        <taxon>Basfia</taxon>
    </lineage>
</organism>